<name>Y3956_STUS1</name>
<reference key="1">
    <citation type="journal article" date="2008" name="Proc. Natl. Acad. Sci. U.S.A.">
        <title>Nitrogen fixation island and rhizosphere competence traits in the genome of root-associated Pseudomonas stutzeri A1501.</title>
        <authorList>
            <person name="Yan Y."/>
            <person name="Yang J."/>
            <person name="Dou Y."/>
            <person name="Chen M."/>
            <person name="Ping S."/>
            <person name="Peng J."/>
            <person name="Lu W."/>
            <person name="Zhang W."/>
            <person name="Yao Z."/>
            <person name="Li H."/>
            <person name="Liu W."/>
            <person name="He S."/>
            <person name="Geng L."/>
            <person name="Zhang X."/>
            <person name="Yang F."/>
            <person name="Yu H."/>
            <person name="Zhan Y."/>
            <person name="Li D."/>
            <person name="Lin Z."/>
            <person name="Wang Y."/>
            <person name="Elmerich C."/>
            <person name="Lin M."/>
            <person name="Jin Q."/>
        </authorList>
    </citation>
    <scope>NUCLEOTIDE SEQUENCE [LARGE SCALE GENOMIC DNA]</scope>
    <source>
        <strain>A1501</strain>
    </source>
</reference>
<keyword id="KW-1185">Reference proteome</keyword>
<sequence>MKSTAPSYLKHHFLIAMPQMADPNFAQTLIYLIEHGPEGAMGLIVNRPSGLSLADVLEQLRPDEPIPALCQSLPIFAGGPVQTDRGFVLHSAEQQFQATLMLGPLGMSTSQDVLFAIADGQGPQRHFVALGYAGWEAGQLEAELADNTWLSCPADPQILFDLPHDQRLQAAAASLGVDLRLLSTQVGHA</sequence>
<dbReference type="EMBL" id="CP000304">
    <property type="protein sequence ID" value="ABP81579.1"/>
    <property type="molecule type" value="Genomic_DNA"/>
</dbReference>
<dbReference type="RefSeq" id="WP_011914961.1">
    <property type="nucleotide sequence ID" value="NC_009434.1"/>
</dbReference>
<dbReference type="SMR" id="A4VRH8"/>
<dbReference type="KEGG" id="psa:PST_3956"/>
<dbReference type="eggNOG" id="COG1678">
    <property type="taxonomic scope" value="Bacteria"/>
</dbReference>
<dbReference type="HOGENOM" id="CLU_057596_1_0_6"/>
<dbReference type="Proteomes" id="UP000000233">
    <property type="component" value="Chromosome"/>
</dbReference>
<dbReference type="GO" id="GO:0005829">
    <property type="term" value="C:cytosol"/>
    <property type="evidence" value="ECO:0007669"/>
    <property type="project" value="TreeGrafter"/>
</dbReference>
<dbReference type="Gene3D" id="3.40.1740.10">
    <property type="entry name" value="VC0467-like"/>
    <property type="match status" value="1"/>
</dbReference>
<dbReference type="HAMAP" id="MF_00758">
    <property type="entry name" value="UPF0301"/>
    <property type="match status" value="1"/>
</dbReference>
<dbReference type="InterPro" id="IPR003774">
    <property type="entry name" value="AlgH-like"/>
</dbReference>
<dbReference type="NCBIfam" id="NF001266">
    <property type="entry name" value="PRK00228.1-1"/>
    <property type="match status" value="1"/>
</dbReference>
<dbReference type="PANTHER" id="PTHR30327">
    <property type="entry name" value="UNCHARACTERIZED PROTEIN YQGE"/>
    <property type="match status" value="1"/>
</dbReference>
<dbReference type="PANTHER" id="PTHR30327:SF1">
    <property type="entry name" value="UPF0301 PROTEIN YQGE"/>
    <property type="match status" value="1"/>
</dbReference>
<dbReference type="Pfam" id="PF02622">
    <property type="entry name" value="DUF179"/>
    <property type="match status" value="1"/>
</dbReference>
<dbReference type="SUPFAM" id="SSF143456">
    <property type="entry name" value="VC0467-like"/>
    <property type="match status" value="1"/>
</dbReference>
<protein>
    <recommendedName>
        <fullName evidence="1">UPF0301 protein PST_3956</fullName>
    </recommendedName>
</protein>
<organism>
    <name type="scientific">Stutzerimonas stutzeri (strain A1501)</name>
    <name type="common">Pseudomonas stutzeri</name>
    <dbReference type="NCBI Taxonomy" id="379731"/>
    <lineage>
        <taxon>Bacteria</taxon>
        <taxon>Pseudomonadati</taxon>
        <taxon>Pseudomonadota</taxon>
        <taxon>Gammaproteobacteria</taxon>
        <taxon>Pseudomonadales</taxon>
        <taxon>Pseudomonadaceae</taxon>
        <taxon>Stutzerimonas</taxon>
    </lineage>
</organism>
<evidence type="ECO:0000255" key="1">
    <source>
        <dbReference type="HAMAP-Rule" id="MF_00758"/>
    </source>
</evidence>
<gene>
    <name type="ordered locus">PST_3956</name>
</gene>
<accession>A4VRH8</accession>
<comment type="similarity">
    <text evidence="1">Belongs to the UPF0301 (AlgH) family.</text>
</comment>
<proteinExistence type="inferred from homology"/>
<feature type="chain" id="PRO_1000046673" description="UPF0301 protein PST_3956">
    <location>
        <begin position="1"/>
        <end position="189"/>
    </location>
</feature>